<accession>B8FZR4</accession>
<sequence length="199" mass="21933">MRVGVLAVQGAFIEHEKILQNLGVECLELRNGKDARQDVEGLILPGGESTTQGKLLRELDMFEPLREKIVAGLPVLATCAGLILLAEELANDSARYFATLPVRVKRNAYGRQLGSFYTEEQFGDLGKVPMTFIRAPYIESVGEDVEILAKVNGDIVGVRYKNQIGLSFHPELNGDRRIHQMFLDSISGGKSFPCTQKAV</sequence>
<proteinExistence type="inferred from homology"/>
<organism>
    <name type="scientific">Desulfitobacterium hafniense (strain DSM 10664 / DCB-2)</name>
    <dbReference type="NCBI Taxonomy" id="272564"/>
    <lineage>
        <taxon>Bacteria</taxon>
        <taxon>Bacillati</taxon>
        <taxon>Bacillota</taxon>
        <taxon>Clostridia</taxon>
        <taxon>Eubacteriales</taxon>
        <taxon>Desulfitobacteriaceae</taxon>
        <taxon>Desulfitobacterium</taxon>
    </lineage>
</organism>
<feature type="chain" id="PRO_1000185885" description="Pyridoxal 5'-phosphate synthase subunit PdxT">
    <location>
        <begin position="1"/>
        <end position="199"/>
    </location>
</feature>
<feature type="active site" description="Nucleophile" evidence="1">
    <location>
        <position position="79"/>
    </location>
</feature>
<feature type="active site" description="Charge relay system" evidence="1">
    <location>
        <position position="169"/>
    </location>
</feature>
<feature type="active site" description="Charge relay system" evidence="1">
    <location>
        <position position="171"/>
    </location>
</feature>
<feature type="binding site" evidence="1">
    <location>
        <begin position="47"/>
        <end position="49"/>
    </location>
    <ligand>
        <name>L-glutamine</name>
        <dbReference type="ChEBI" id="CHEBI:58359"/>
    </ligand>
</feature>
<feature type="binding site" evidence="1">
    <location>
        <position position="106"/>
    </location>
    <ligand>
        <name>L-glutamine</name>
        <dbReference type="ChEBI" id="CHEBI:58359"/>
    </ligand>
</feature>
<feature type="binding site" evidence="1">
    <location>
        <begin position="133"/>
        <end position="134"/>
    </location>
    <ligand>
        <name>L-glutamine</name>
        <dbReference type="ChEBI" id="CHEBI:58359"/>
    </ligand>
</feature>
<gene>
    <name evidence="1" type="primary">pdxT</name>
    <name type="ordered locus">Dhaf_1078</name>
</gene>
<reference key="1">
    <citation type="journal article" date="2012" name="BMC Microbiol.">
        <title>Genome sequence of Desulfitobacterium hafniense DCB-2, a Gram-positive anaerobe capable of dehalogenation and metal reduction.</title>
        <authorList>
            <person name="Kim S.H."/>
            <person name="Harzman C."/>
            <person name="Davis J.K."/>
            <person name="Hutcheson R."/>
            <person name="Broderick J.B."/>
            <person name="Marsh T.L."/>
            <person name="Tiedje J.M."/>
        </authorList>
    </citation>
    <scope>NUCLEOTIDE SEQUENCE [LARGE SCALE GENOMIC DNA]</scope>
    <source>
        <strain>DSM 10664 / DCB-2</strain>
    </source>
</reference>
<name>PDXT_DESHD</name>
<evidence type="ECO:0000255" key="1">
    <source>
        <dbReference type="HAMAP-Rule" id="MF_01615"/>
    </source>
</evidence>
<comment type="function">
    <text evidence="1">Catalyzes the hydrolysis of glutamine to glutamate and ammonia as part of the biosynthesis of pyridoxal 5'-phosphate. The resulting ammonia molecule is channeled to the active site of PdxS.</text>
</comment>
<comment type="catalytic activity">
    <reaction evidence="1">
        <text>aldehydo-D-ribose 5-phosphate + D-glyceraldehyde 3-phosphate + L-glutamine = pyridoxal 5'-phosphate + L-glutamate + phosphate + 3 H2O + H(+)</text>
        <dbReference type="Rhea" id="RHEA:31507"/>
        <dbReference type="ChEBI" id="CHEBI:15377"/>
        <dbReference type="ChEBI" id="CHEBI:15378"/>
        <dbReference type="ChEBI" id="CHEBI:29985"/>
        <dbReference type="ChEBI" id="CHEBI:43474"/>
        <dbReference type="ChEBI" id="CHEBI:58273"/>
        <dbReference type="ChEBI" id="CHEBI:58359"/>
        <dbReference type="ChEBI" id="CHEBI:59776"/>
        <dbReference type="ChEBI" id="CHEBI:597326"/>
        <dbReference type="EC" id="4.3.3.6"/>
    </reaction>
</comment>
<comment type="catalytic activity">
    <reaction evidence="1">
        <text>L-glutamine + H2O = L-glutamate + NH4(+)</text>
        <dbReference type="Rhea" id="RHEA:15889"/>
        <dbReference type="ChEBI" id="CHEBI:15377"/>
        <dbReference type="ChEBI" id="CHEBI:28938"/>
        <dbReference type="ChEBI" id="CHEBI:29985"/>
        <dbReference type="ChEBI" id="CHEBI:58359"/>
        <dbReference type="EC" id="3.5.1.2"/>
    </reaction>
</comment>
<comment type="pathway">
    <text evidence="1">Cofactor biosynthesis; pyridoxal 5'-phosphate biosynthesis.</text>
</comment>
<comment type="subunit">
    <text evidence="1">In the presence of PdxS, forms a dodecamer of heterodimers. Only shows activity in the heterodimer.</text>
</comment>
<comment type="similarity">
    <text evidence="1">Belongs to the glutaminase PdxT/SNO family.</text>
</comment>
<protein>
    <recommendedName>
        <fullName evidence="1">Pyridoxal 5'-phosphate synthase subunit PdxT</fullName>
        <ecNumber evidence="1">4.3.3.6</ecNumber>
    </recommendedName>
    <alternativeName>
        <fullName evidence="1">Pdx2</fullName>
    </alternativeName>
    <alternativeName>
        <fullName evidence="1">Pyridoxal 5'-phosphate synthase glutaminase subunit</fullName>
        <ecNumber evidence="1">3.5.1.2</ecNumber>
    </alternativeName>
</protein>
<keyword id="KW-0315">Glutamine amidotransferase</keyword>
<keyword id="KW-0378">Hydrolase</keyword>
<keyword id="KW-0456">Lyase</keyword>
<keyword id="KW-0663">Pyridoxal phosphate</keyword>
<dbReference type="EC" id="4.3.3.6" evidence="1"/>
<dbReference type="EC" id="3.5.1.2" evidence="1"/>
<dbReference type="EMBL" id="CP001336">
    <property type="protein sequence ID" value="ACL19138.1"/>
    <property type="molecule type" value="Genomic_DNA"/>
</dbReference>
<dbReference type="RefSeq" id="WP_005813584.1">
    <property type="nucleotide sequence ID" value="NC_011830.1"/>
</dbReference>
<dbReference type="SMR" id="B8FZR4"/>
<dbReference type="MEROPS" id="C26.A32"/>
<dbReference type="KEGG" id="dhd:Dhaf_1078"/>
<dbReference type="HOGENOM" id="CLU_069674_2_0_9"/>
<dbReference type="UniPathway" id="UPA00245"/>
<dbReference type="Proteomes" id="UP000007726">
    <property type="component" value="Chromosome"/>
</dbReference>
<dbReference type="GO" id="GO:0005829">
    <property type="term" value="C:cytosol"/>
    <property type="evidence" value="ECO:0007669"/>
    <property type="project" value="TreeGrafter"/>
</dbReference>
<dbReference type="GO" id="GO:1903600">
    <property type="term" value="C:glutaminase complex"/>
    <property type="evidence" value="ECO:0007669"/>
    <property type="project" value="TreeGrafter"/>
</dbReference>
<dbReference type="GO" id="GO:0004359">
    <property type="term" value="F:glutaminase activity"/>
    <property type="evidence" value="ECO:0007669"/>
    <property type="project" value="UniProtKB-UniRule"/>
</dbReference>
<dbReference type="GO" id="GO:0036381">
    <property type="term" value="F:pyridoxal 5'-phosphate synthase (glutamine hydrolysing) activity"/>
    <property type="evidence" value="ECO:0007669"/>
    <property type="project" value="UniProtKB-UniRule"/>
</dbReference>
<dbReference type="GO" id="GO:0006543">
    <property type="term" value="P:glutamine catabolic process"/>
    <property type="evidence" value="ECO:0007669"/>
    <property type="project" value="UniProtKB-UniRule"/>
</dbReference>
<dbReference type="GO" id="GO:0042823">
    <property type="term" value="P:pyridoxal phosphate biosynthetic process"/>
    <property type="evidence" value="ECO:0007669"/>
    <property type="project" value="UniProtKB-UniRule"/>
</dbReference>
<dbReference type="GO" id="GO:0008614">
    <property type="term" value="P:pyridoxine metabolic process"/>
    <property type="evidence" value="ECO:0007669"/>
    <property type="project" value="TreeGrafter"/>
</dbReference>
<dbReference type="CDD" id="cd01749">
    <property type="entry name" value="GATase1_PB"/>
    <property type="match status" value="1"/>
</dbReference>
<dbReference type="FunFam" id="3.40.50.880:FF:000010">
    <property type="entry name" value="uncharacterized protein LOC100176842 isoform X2"/>
    <property type="match status" value="1"/>
</dbReference>
<dbReference type="Gene3D" id="3.40.50.880">
    <property type="match status" value="1"/>
</dbReference>
<dbReference type="HAMAP" id="MF_01615">
    <property type="entry name" value="PdxT"/>
    <property type="match status" value="1"/>
</dbReference>
<dbReference type="InterPro" id="IPR029062">
    <property type="entry name" value="Class_I_gatase-like"/>
</dbReference>
<dbReference type="InterPro" id="IPR002161">
    <property type="entry name" value="PdxT/SNO"/>
</dbReference>
<dbReference type="InterPro" id="IPR021196">
    <property type="entry name" value="PdxT/SNO_CS"/>
</dbReference>
<dbReference type="NCBIfam" id="TIGR03800">
    <property type="entry name" value="PLP_synth_Pdx2"/>
    <property type="match status" value="1"/>
</dbReference>
<dbReference type="PANTHER" id="PTHR31559">
    <property type="entry name" value="PYRIDOXAL 5'-PHOSPHATE SYNTHASE SUBUNIT SNO"/>
    <property type="match status" value="1"/>
</dbReference>
<dbReference type="PANTHER" id="PTHR31559:SF0">
    <property type="entry name" value="PYRIDOXAL 5'-PHOSPHATE SYNTHASE SUBUNIT SNO1-RELATED"/>
    <property type="match status" value="1"/>
</dbReference>
<dbReference type="Pfam" id="PF01174">
    <property type="entry name" value="SNO"/>
    <property type="match status" value="1"/>
</dbReference>
<dbReference type="PIRSF" id="PIRSF005639">
    <property type="entry name" value="Glut_amidoT_SNO"/>
    <property type="match status" value="1"/>
</dbReference>
<dbReference type="SUPFAM" id="SSF52317">
    <property type="entry name" value="Class I glutamine amidotransferase-like"/>
    <property type="match status" value="1"/>
</dbReference>
<dbReference type="PROSITE" id="PS01236">
    <property type="entry name" value="PDXT_SNO_1"/>
    <property type="match status" value="1"/>
</dbReference>
<dbReference type="PROSITE" id="PS51130">
    <property type="entry name" value="PDXT_SNO_2"/>
    <property type="match status" value="1"/>
</dbReference>